<sequence length="282" mass="32924">MSSSLQELCRKNLPDDILPEFFDDYVLQLLGLHWQDHGSLQRTGKNQVLVQQEPIHINEALKVAASEGNFEIVELLLSWKADPRYAVVGALESKYYDLVYKYYNLIEDRHDMLPLIQNSETFERCHELNNCSLKCLFKHAVIYDKLPILQKYADYLDGWPYCNQMLFELACKKQKYNMVVWIEGVLGVGNFTILFTIAIIKRDLQLYSLGYSIILERMYSCGYDPTFLLNHYLRVVSTKGLLPFVLKTIEYGGSKEIAITLAKKYQHETILRYFETRKSQEC</sequence>
<reference key="1">
    <citation type="submission" date="2003-03" db="EMBL/GenBank/DDBJ databases">
        <title>African swine fever virus genomes.</title>
        <authorList>
            <person name="Kutish G.F."/>
            <person name="Rock D.L."/>
        </authorList>
    </citation>
    <scope>NUCLEOTIDE SEQUENCE [LARGE SCALE GENOMIC DNA]</scope>
</reference>
<organismHost>
    <name type="scientific">Ornithodoros</name>
    <name type="common">relapsing fever ticks</name>
    <dbReference type="NCBI Taxonomy" id="6937"/>
</organismHost>
<organismHost>
    <name type="scientific">Phacochoerus aethiopicus</name>
    <name type="common">Warthog</name>
    <dbReference type="NCBI Taxonomy" id="85517"/>
</organismHost>
<organismHost>
    <name type="scientific">Phacochoerus africanus</name>
    <name type="common">Warthog</name>
    <dbReference type="NCBI Taxonomy" id="41426"/>
</organismHost>
<organismHost>
    <name type="scientific">Potamochoerus larvatus</name>
    <name type="common">Bushpig</name>
    <dbReference type="NCBI Taxonomy" id="273792"/>
</organismHost>
<organismHost>
    <name type="scientific">Sus scrofa</name>
    <name type="common">Pig</name>
    <dbReference type="NCBI Taxonomy" id="9823"/>
</organismHost>
<proteinExistence type="inferred from homology"/>
<evidence type="ECO:0000250" key="1">
    <source>
        <dbReference type="UniProtKB" id="Q89642"/>
    </source>
</evidence>
<evidence type="ECO:0000305" key="2"/>
<protein>
    <recommendedName>
        <fullName>Protein MGF 505-3R</fullName>
    </recommendedName>
</protein>
<keyword id="KW-0244">Early protein</keyword>
<feature type="chain" id="PRO_0000373323" description="Protein MGF 505-3R">
    <location>
        <begin position="1"/>
        <end position="282"/>
    </location>
</feature>
<dbReference type="EMBL" id="AY261360">
    <property type="status" value="NOT_ANNOTATED_CDS"/>
    <property type="molecule type" value="Genomic_DNA"/>
</dbReference>
<dbReference type="SMR" id="P0C740"/>
<dbReference type="Proteomes" id="UP000000861">
    <property type="component" value="Segment"/>
</dbReference>
<dbReference type="InterPro" id="IPR004858">
    <property type="entry name" value="MGF_505"/>
</dbReference>
<dbReference type="Pfam" id="PF03158">
    <property type="entry name" value="DUF249"/>
    <property type="match status" value="1"/>
</dbReference>
<gene>
    <name type="ordered locus">Ken-040</name>
</gene>
<accession>P0C740</accession>
<comment type="function">
    <text evidence="1">Plays a role in virus cell tropism, and may be required for efficient virus replication in macrophages.</text>
</comment>
<comment type="induction">
    <text evidence="2">Expressed in the early phase of the viral replicative cycle.</text>
</comment>
<comment type="similarity">
    <text evidence="2">Belongs to the asfivirus MGF 505 family.</text>
</comment>
<organism>
    <name type="scientific">African swine fever virus (isolate Pig/Kenya/KEN-50/1950)</name>
    <name type="common">ASFV</name>
    <dbReference type="NCBI Taxonomy" id="561445"/>
    <lineage>
        <taxon>Viruses</taxon>
        <taxon>Varidnaviria</taxon>
        <taxon>Bamfordvirae</taxon>
        <taxon>Nucleocytoviricota</taxon>
        <taxon>Pokkesviricetes</taxon>
        <taxon>Asfuvirales</taxon>
        <taxon>Asfarviridae</taxon>
        <taxon>Asfivirus</taxon>
        <taxon>African swine fever virus</taxon>
    </lineage>
</organism>
<name>5053R_ASFK5</name>